<sequence length="360" mass="36738">MKSQTSGYVDPQTEEYDESREKSYQVLIAVSGVLSITSLLILVLFVPSMYNYVDNISRFSRRDFEFCQASANDLETEMMSVREGLLRGRNVTKRAAGYGHYNPSMLAADSPQFQECPACCIPGERGPSGDSGLPALPGAPGPDGAPGRPGTTPNASCIPERVFEPPPCLPCPQGPRGVPGHPGFPGDPGEYGIGGRPGSDGMPGKPGDPGLAGPIGPPGESGPIGDKGRTPEAHVIPGPPGDSGLPGPWGPPGSAGMPGEDGYAGTPGEKGWPGPPGAPGPGGMPGPNGPTGEQGPSGTPGTCVCQDTEVVMNDEKGRVPAPRDNVAPGATGGSYEPQGGNDAAAPSAISQSQNRRIRKW</sequence>
<keyword id="KW-0176">Collagen</keyword>
<keyword id="KW-0193">Cuticle</keyword>
<keyword id="KW-1015">Disulfide bond</keyword>
<keyword id="KW-1185">Reference proteome</keyword>
<keyword id="KW-0677">Repeat</keyword>
<keyword id="KW-0732">Signal</keyword>
<gene>
    <name type="primary">dpy-2</name>
    <name type="ORF">T14B4.6</name>
</gene>
<protein>
    <recommendedName>
        <fullName>Cuticle collagen dpy-2</fullName>
    </recommendedName>
    <alternativeName>
        <fullName>Protein dumpy-2</fullName>
    </alternativeName>
</protein>
<name>DPY2_CAEEL</name>
<proteinExistence type="evidence at protein level"/>
<comment type="function">
    <text>Nematode cuticles are composed largely of collagen-like proteins. The cuticle functions both as an exoskeleton and as a barrier to protect the worm from its environment. Mutations in dpy-2 affects the body shape.</text>
</comment>
<comment type="subunit">
    <text>Collagen polypeptide chains are complexed within the cuticle by disulfide bonds and other types of covalent cross-links.</text>
</comment>
<comment type="similarity">
    <text evidence="4">Belongs to the cuticular collagen family.</text>
</comment>
<feature type="signal peptide" evidence="1">
    <location>
        <begin position="1"/>
        <end status="unknown"/>
    </location>
</feature>
<feature type="chain" id="PRO_0000006428" description="Cuticle collagen dpy-2">
    <location>
        <begin status="unknown"/>
        <end position="360"/>
    </location>
</feature>
<feature type="region of interest" description="Triple-helical region">
    <location>
        <begin position="123"/>
        <end position="152"/>
    </location>
</feature>
<feature type="region of interest" description="Disordered" evidence="2">
    <location>
        <begin position="127"/>
        <end position="158"/>
    </location>
</feature>
<feature type="region of interest" description="Disordered" evidence="2">
    <location>
        <begin position="174"/>
        <end position="360"/>
    </location>
</feature>
<feature type="region of interest" description="Triple-helical region">
    <location>
        <begin position="174"/>
        <end position="230"/>
    </location>
</feature>
<feature type="region of interest" description="Triple-helical region">
    <location>
        <begin position="238"/>
        <end position="303"/>
    </location>
</feature>
<feature type="compositionally biased region" description="Gly residues" evidence="2">
    <location>
        <begin position="189"/>
        <end position="198"/>
    </location>
</feature>
<feature type="compositionally biased region" description="Low complexity" evidence="2">
    <location>
        <begin position="242"/>
        <end position="258"/>
    </location>
</feature>
<feature type="compositionally biased region" description="Pro residues" evidence="2">
    <location>
        <begin position="273"/>
        <end position="288"/>
    </location>
</feature>
<feature type="mutagenesis site" description="In dpy2(SC38)." evidence="3">
    <original>G</original>
    <variation>E</variation>
    <location>
        <position position="129"/>
    </location>
</feature>
<feature type="mutagenesis site" description="In dpy2(E8)." evidence="3">
    <original>G</original>
    <variation>R</variation>
    <location>
        <position position="183"/>
    </location>
</feature>
<feature type="mutagenesis site" description="In dpy2(E489)." evidence="3">
    <original>G</original>
    <variation>R</variation>
    <location>
        <position position="247"/>
    </location>
</feature>
<feature type="mutagenesis site" description="In dpy2(Q292)." evidence="3">
    <original>G</original>
    <variation>R</variation>
    <location>
        <position position="253"/>
    </location>
</feature>
<feature type="sequence conflict" description="In Ref. 2; CCD65274." evidence="4" ref="2">
    <original>RRIRKW</original>
    <variation>DGYGNGESVSNHKNNGGYYHLRKFTQ</variation>
    <location>
        <begin position="355"/>
        <end position="360"/>
    </location>
</feature>
<organism>
    <name type="scientific">Caenorhabditis elegans</name>
    <dbReference type="NCBI Taxonomy" id="6239"/>
    <lineage>
        <taxon>Eukaryota</taxon>
        <taxon>Metazoa</taxon>
        <taxon>Ecdysozoa</taxon>
        <taxon>Nematoda</taxon>
        <taxon>Chromadorea</taxon>
        <taxon>Rhabditida</taxon>
        <taxon>Rhabditina</taxon>
        <taxon>Rhabditomorpha</taxon>
        <taxon>Rhabditoidea</taxon>
        <taxon>Rhabditidae</taxon>
        <taxon>Peloderinae</taxon>
        <taxon>Caenorhabditis</taxon>
    </lineage>
</organism>
<reference key="1">
    <citation type="journal article" date="1993" name="Mol. Biol. Cell">
        <title>Molecular and genetic analyses of the Caenorhabditis elegans dpy-2 and dpy-10 collagen genes: a variety of molecular alterations affect organismal morphology.</title>
        <authorList>
            <person name="Levy A.D."/>
            <person name="Yang J."/>
            <person name="Kramer J.M."/>
        </authorList>
    </citation>
    <scope>NUCLEOTIDE SEQUENCE [GENOMIC DNA]</scope>
    <scope>MUTAGENESIS OF GLY-129; GLY-183; GLY-247 AND GLY-253</scope>
    <source>
        <strain>Bristol N2</strain>
    </source>
</reference>
<reference key="2">
    <citation type="journal article" date="1998" name="Science">
        <title>Genome sequence of the nematode C. elegans: a platform for investigating biology.</title>
        <authorList>
            <consortium name="The C. elegans sequencing consortium"/>
        </authorList>
    </citation>
    <scope>NUCLEOTIDE SEQUENCE [LARGE SCALE GENOMIC DNA]</scope>
    <source>
        <strain>Bristol N2</strain>
    </source>
</reference>
<accession>P35799</accession>
<accession>Q22477</accession>
<evidence type="ECO:0000255" key="1"/>
<evidence type="ECO:0000256" key="2">
    <source>
        <dbReference type="SAM" id="MobiDB-lite"/>
    </source>
</evidence>
<evidence type="ECO:0000269" key="3">
    <source>
    </source>
</evidence>
<evidence type="ECO:0000305" key="4"/>
<dbReference type="EMBL" id="L12706">
    <property type="protein sequence ID" value="AAA17398.2"/>
    <property type="molecule type" value="Genomic_DNA"/>
</dbReference>
<dbReference type="EMBL" id="FO080626">
    <property type="protein sequence ID" value="CCD65274.1"/>
    <property type="molecule type" value="Genomic_DNA"/>
</dbReference>
<dbReference type="PIR" id="T28888">
    <property type="entry name" value="T28888"/>
</dbReference>
<dbReference type="PIR" id="T37285">
    <property type="entry name" value="T37285"/>
</dbReference>
<dbReference type="RefSeq" id="NP_495367.1">
    <property type="nucleotide sequence ID" value="NM_062966.5"/>
</dbReference>
<dbReference type="BioGRID" id="39445">
    <property type="interactions" value="5"/>
</dbReference>
<dbReference type="FunCoup" id="P35799">
    <property type="interactions" value="1140"/>
</dbReference>
<dbReference type="IntAct" id="P35799">
    <property type="interactions" value="1"/>
</dbReference>
<dbReference type="STRING" id="6239.T14B4.6.1"/>
<dbReference type="PaxDb" id="6239-T14B4.6"/>
<dbReference type="PeptideAtlas" id="P35799"/>
<dbReference type="EnsemblMetazoa" id="T14B4.6.1">
    <property type="protein sequence ID" value="T14B4.6.1"/>
    <property type="gene ID" value="WBGene00001064"/>
</dbReference>
<dbReference type="GeneID" id="174107"/>
<dbReference type="KEGG" id="cel:CELE_T14B4.6"/>
<dbReference type="UCSC" id="T14B4.6">
    <property type="organism name" value="c. elegans"/>
</dbReference>
<dbReference type="AGR" id="WB:WBGene00001064"/>
<dbReference type="CTD" id="174107"/>
<dbReference type="WormBase" id="T14B4.6">
    <property type="protein sequence ID" value="CE04953"/>
    <property type="gene ID" value="WBGene00001064"/>
    <property type="gene designation" value="dpy-2"/>
</dbReference>
<dbReference type="eggNOG" id="KOG3544">
    <property type="taxonomic scope" value="Eukaryota"/>
</dbReference>
<dbReference type="GeneTree" id="ENSGT00970000196743"/>
<dbReference type="HOGENOM" id="CLU_001074_4_2_1"/>
<dbReference type="InParanoid" id="P35799"/>
<dbReference type="OrthoDB" id="5983381at2759"/>
<dbReference type="PhylomeDB" id="P35799"/>
<dbReference type="PRO" id="PR:P35799"/>
<dbReference type="Proteomes" id="UP000001940">
    <property type="component" value="Chromosome II"/>
</dbReference>
<dbReference type="Bgee" id="WBGene00001064">
    <property type="expression patterns" value="Expressed in embryo and 3 other cell types or tissues"/>
</dbReference>
<dbReference type="GO" id="GO:0005581">
    <property type="term" value="C:collagen trimer"/>
    <property type="evidence" value="ECO:0000250"/>
    <property type="project" value="WormBase"/>
</dbReference>
<dbReference type="GO" id="GO:0042329">
    <property type="term" value="F:structural constituent of collagen and cuticulin-based cuticle"/>
    <property type="evidence" value="ECO:0000250"/>
    <property type="project" value="WormBase"/>
</dbReference>
<dbReference type="GO" id="GO:0042338">
    <property type="term" value="P:cuticle development involved in collagen and cuticulin-based cuticle molting cycle"/>
    <property type="evidence" value="ECO:0000315"/>
    <property type="project" value="WormBase"/>
</dbReference>
<dbReference type="GO" id="GO:0040032">
    <property type="term" value="P:post-embryonic body morphogenesis"/>
    <property type="evidence" value="ECO:0000315"/>
    <property type="project" value="WormBase"/>
</dbReference>
<dbReference type="GO" id="GO:0040014">
    <property type="term" value="P:regulation of multicellular organism growth"/>
    <property type="evidence" value="ECO:0000315"/>
    <property type="project" value="WormBase"/>
</dbReference>
<dbReference type="InterPro" id="IPR002486">
    <property type="entry name" value="Col_cuticle_N"/>
</dbReference>
<dbReference type="InterPro" id="IPR008160">
    <property type="entry name" value="Collagen"/>
</dbReference>
<dbReference type="PANTHER" id="PTHR24637">
    <property type="entry name" value="COLLAGEN"/>
    <property type="match status" value="1"/>
</dbReference>
<dbReference type="PANTHER" id="PTHR24637:SF421">
    <property type="entry name" value="CUTICLE COLLAGEN DPY-2"/>
    <property type="match status" value="1"/>
</dbReference>
<dbReference type="Pfam" id="PF01484">
    <property type="entry name" value="Col_cuticle_N"/>
    <property type="match status" value="1"/>
</dbReference>
<dbReference type="Pfam" id="PF01391">
    <property type="entry name" value="Collagen"/>
    <property type="match status" value="2"/>
</dbReference>
<dbReference type="SMART" id="SM01088">
    <property type="entry name" value="Col_cuticle_N"/>
    <property type="match status" value="1"/>
</dbReference>